<name>RNH2_SHEWM</name>
<keyword id="KW-0963">Cytoplasm</keyword>
<keyword id="KW-0255">Endonuclease</keyword>
<keyword id="KW-0378">Hydrolase</keyword>
<keyword id="KW-0464">Manganese</keyword>
<keyword id="KW-0479">Metal-binding</keyword>
<keyword id="KW-0540">Nuclease</keyword>
<keyword id="KW-1185">Reference proteome</keyword>
<comment type="function">
    <text evidence="1">Endonuclease that specifically degrades the RNA of RNA-DNA hybrids.</text>
</comment>
<comment type="catalytic activity">
    <reaction evidence="1">
        <text>Endonucleolytic cleavage to 5'-phosphomonoester.</text>
        <dbReference type="EC" id="3.1.26.4"/>
    </reaction>
</comment>
<comment type="cofactor">
    <cofactor evidence="1">
        <name>Mn(2+)</name>
        <dbReference type="ChEBI" id="CHEBI:29035"/>
    </cofactor>
    <cofactor evidence="1">
        <name>Mg(2+)</name>
        <dbReference type="ChEBI" id="CHEBI:18420"/>
    </cofactor>
    <text evidence="1">Manganese or magnesium. Binds 1 divalent metal ion per monomer in the absence of substrate. May bind a second metal ion after substrate binding.</text>
</comment>
<comment type="subcellular location">
    <subcellularLocation>
        <location evidence="1">Cytoplasm</location>
    </subcellularLocation>
</comment>
<comment type="similarity">
    <text evidence="1">Belongs to the RNase HII family.</text>
</comment>
<evidence type="ECO:0000255" key="1">
    <source>
        <dbReference type="HAMAP-Rule" id="MF_00052"/>
    </source>
</evidence>
<evidence type="ECO:0000255" key="2">
    <source>
        <dbReference type="PROSITE-ProRule" id="PRU01319"/>
    </source>
</evidence>
<organism>
    <name type="scientific">Shewanella woodyi (strain ATCC 51908 / MS32)</name>
    <dbReference type="NCBI Taxonomy" id="392500"/>
    <lineage>
        <taxon>Bacteria</taxon>
        <taxon>Pseudomonadati</taxon>
        <taxon>Pseudomonadota</taxon>
        <taxon>Gammaproteobacteria</taxon>
        <taxon>Alteromonadales</taxon>
        <taxon>Shewanellaceae</taxon>
        <taxon>Shewanella</taxon>
    </lineage>
</organism>
<gene>
    <name evidence="1" type="primary">rnhB</name>
    <name type="ordered locus">Swoo_3267</name>
</gene>
<feature type="chain" id="PRO_1000091656" description="Ribonuclease HII">
    <location>
        <begin position="1"/>
        <end position="213"/>
    </location>
</feature>
<feature type="domain" description="RNase H type-2" evidence="2">
    <location>
        <begin position="18"/>
        <end position="213"/>
    </location>
</feature>
<feature type="binding site" evidence="1">
    <location>
        <position position="24"/>
    </location>
    <ligand>
        <name>a divalent metal cation</name>
        <dbReference type="ChEBI" id="CHEBI:60240"/>
    </ligand>
</feature>
<feature type="binding site" evidence="1">
    <location>
        <position position="25"/>
    </location>
    <ligand>
        <name>a divalent metal cation</name>
        <dbReference type="ChEBI" id="CHEBI:60240"/>
    </ligand>
</feature>
<feature type="binding site" evidence="1">
    <location>
        <position position="116"/>
    </location>
    <ligand>
        <name>a divalent metal cation</name>
        <dbReference type="ChEBI" id="CHEBI:60240"/>
    </ligand>
</feature>
<dbReference type="EC" id="3.1.26.4" evidence="1"/>
<dbReference type="EMBL" id="CP000961">
    <property type="protein sequence ID" value="ACA87537.1"/>
    <property type="molecule type" value="Genomic_DNA"/>
</dbReference>
<dbReference type="RefSeq" id="WP_012325873.1">
    <property type="nucleotide sequence ID" value="NC_010506.1"/>
</dbReference>
<dbReference type="SMR" id="B1KNS9"/>
<dbReference type="STRING" id="392500.Swoo_3267"/>
<dbReference type="KEGG" id="swd:Swoo_3267"/>
<dbReference type="eggNOG" id="COG0164">
    <property type="taxonomic scope" value="Bacteria"/>
</dbReference>
<dbReference type="HOGENOM" id="CLU_036532_3_2_6"/>
<dbReference type="Proteomes" id="UP000002168">
    <property type="component" value="Chromosome"/>
</dbReference>
<dbReference type="GO" id="GO:0005737">
    <property type="term" value="C:cytoplasm"/>
    <property type="evidence" value="ECO:0007669"/>
    <property type="project" value="UniProtKB-SubCell"/>
</dbReference>
<dbReference type="GO" id="GO:0032299">
    <property type="term" value="C:ribonuclease H2 complex"/>
    <property type="evidence" value="ECO:0007669"/>
    <property type="project" value="TreeGrafter"/>
</dbReference>
<dbReference type="GO" id="GO:0030145">
    <property type="term" value="F:manganese ion binding"/>
    <property type="evidence" value="ECO:0007669"/>
    <property type="project" value="UniProtKB-UniRule"/>
</dbReference>
<dbReference type="GO" id="GO:0003723">
    <property type="term" value="F:RNA binding"/>
    <property type="evidence" value="ECO:0007669"/>
    <property type="project" value="InterPro"/>
</dbReference>
<dbReference type="GO" id="GO:0004523">
    <property type="term" value="F:RNA-DNA hybrid ribonuclease activity"/>
    <property type="evidence" value="ECO:0007669"/>
    <property type="project" value="UniProtKB-UniRule"/>
</dbReference>
<dbReference type="GO" id="GO:0043137">
    <property type="term" value="P:DNA replication, removal of RNA primer"/>
    <property type="evidence" value="ECO:0007669"/>
    <property type="project" value="TreeGrafter"/>
</dbReference>
<dbReference type="GO" id="GO:0006298">
    <property type="term" value="P:mismatch repair"/>
    <property type="evidence" value="ECO:0007669"/>
    <property type="project" value="TreeGrafter"/>
</dbReference>
<dbReference type="CDD" id="cd07182">
    <property type="entry name" value="RNase_HII_bacteria_HII_like"/>
    <property type="match status" value="1"/>
</dbReference>
<dbReference type="FunFam" id="3.30.420.10:FF:000006">
    <property type="entry name" value="Ribonuclease HII"/>
    <property type="match status" value="1"/>
</dbReference>
<dbReference type="Gene3D" id="3.30.420.10">
    <property type="entry name" value="Ribonuclease H-like superfamily/Ribonuclease H"/>
    <property type="match status" value="1"/>
</dbReference>
<dbReference type="HAMAP" id="MF_00052_B">
    <property type="entry name" value="RNase_HII_B"/>
    <property type="match status" value="1"/>
</dbReference>
<dbReference type="InterPro" id="IPR022898">
    <property type="entry name" value="RNase_HII"/>
</dbReference>
<dbReference type="InterPro" id="IPR001352">
    <property type="entry name" value="RNase_HII/HIII"/>
</dbReference>
<dbReference type="InterPro" id="IPR024567">
    <property type="entry name" value="RNase_HII/HIII_dom"/>
</dbReference>
<dbReference type="InterPro" id="IPR012337">
    <property type="entry name" value="RNaseH-like_sf"/>
</dbReference>
<dbReference type="InterPro" id="IPR036397">
    <property type="entry name" value="RNaseH_sf"/>
</dbReference>
<dbReference type="NCBIfam" id="NF000595">
    <property type="entry name" value="PRK00015.1-3"/>
    <property type="match status" value="1"/>
</dbReference>
<dbReference type="NCBIfam" id="NF000596">
    <property type="entry name" value="PRK00015.1-4"/>
    <property type="match status" value="1"/>
</dbReference>
<dbReference type="PANTHER" id="PTHR10954">
    <property type="entry name" value="RIBONUCLEASE H2 SUBUNIT A"/>
    <property type="match status" value="1"/>
</dbReference>
<dbReference type="PANTHER" id="PTHR10954:SF18">
    <property type="entry name" value="RIBONUCLEASE HII"/>
    <property type="match status" value="1"/>
</dbReference>
<dbReference type="Pfam" id="PF01351">
    <property type="entry name" value="RNase_HII"/>
    <property type="match status" value="1"/>
</dbReference>
<dbReference type="SUPFAM" id="SSF53098">
    <property type="entry name" value="Ribonuclease H-like"/>
    <property type="match status" value="1"/>
</dbReference>
<dbReference type="PROSITE" id="PS51975">
    <property type="entry name" value="RNASE_H_2"/>
    <property type="match status" value="1"/>
</dbReference>
<sequence length="213" mass="23354">MAVFKGITPEQIESLSSGLHAGVDEVGRGPLVGNVVTAAVILDPNNPITGLNDSKKLTEKKRELLFAEIHEKALCINVGHATPDEIDELNILHATMLAMQRAVAGLDIKPLSVLVDGNRTPAFYHGEETEDRIEAHAVVKGDGLISAISAASIIAKVIRDREMDLLDMEYPQYGFAKHKGYPTKAHFEALELHGVLPEHRKSFRPVKERLAKR</sequence>
<proteinExistence type="inferred from homology"/>
<accession>B1KNS9</accession>
<protein>
    <recommendedName>
        <fullName evidence="1">Ribonuclease HII</fullName>
        <shortName evidence="1">RNase HII</shortName>
        <ecNumber evidence="1">3.1.26.4</ecNumber>
    </recommendedName>
</protein>
<reference key="1">
    <citation type="submission" date="2008-02" db="EMBL/GenBank/DDBJ databases">
        <title>Complete sequence of Shewanella woodyi ATCC 51908.</title>
        <authorList>
            <consortium name="US DOE Joint Genome Institute"/>
            <person name="Copeland A."/>
            <person name="Lucas S."/>
            <person name="Lapidus A."/>
            <person name="Glavina del Rio T."/>
            <person name="Dalin E."/>
            <person name="Tice H."/>
            <person name="Bruce D."/>
            <person name="Goodwin L."/>
            <person name="Pitluck S."/>
            <person name="Sims D."/>
            <person name="Brettin T."/>
            <person name="Detter J.C."/>
            <person name="Han C."/>
            <person name="Kuske C.R."/>
            <person name="Schmutz J."/>
            <person name="Larimer F."/>
            <person name="Land M."/>
            <person name="Hauser L."/>
            <person name="Kyrpides N."/>
            <person name="Lykidis A."/>
            <person name="Zhao J.-S."/>
            <person name="Richardson P."/>
        </authorList>
    </citation>
    <scope>NUCLEOTIDE SEQUENCE [LARGE SCALE GENOMIC DNA]</scope>
    <source>
        <strain>ATCC 51908 / MS32</strain>
    </source>
</reference>